<proteinExistence type="inferred from homology"/>
<feature type="chain" id="PRO_0000242445" description="Large ribosomal subunit protein uL4">
    <location>
        <begin position="1"/>
        <end position="207"/>
    </location>
</feature>
<feature type="region of interest" description="Disordered" evidence="2">
    <location>
        <begin position="49"/>
        <end position="78"/>
    </location>
</feature>
<organism>
    <name type="scientific">Streptococcus thermophilus (strain ATCC BAA-250 / LMG 18311)</name>
    <dbReference type="NCBI Taxonomy" id="264199"/>
    <lineage>
        <taxon>Bacteria</taxon>
        <taxon>Bacillati</taxon>
        <taxon>Bacillota</taxon>
        <taxon>Bacilli</taxon>
        <taxon>Lactobacillales</taxon>
        <taxon>Streptococcaceae</taxon>
        <taxon>Streptococcus</taxon>
    </lineage>
</organism>
<gene>
    <name evidence="1" type="primary">rplD</name>
    <name type="ordered locus">stu1933</name>
</gene>
<evidence type="ECO:0000255" key="1">
    <source>
        <dbReference type="HAMAP-Rule" id="MF_01328"/>
    </source>
</evidence>
<evidence type="ECO:0000256" key="2">
    <source>
        <dbReference type="SAM" id="MobiDB-lite"/>
    </source>
</evidence>
<evidence type="ECO:0000305" key="3"/>
<comment type="function">
    <text evidence="1">One of the primary rRNA binding proteins, this protein initially binds near the 5'-end of the 23S rRNA. It is important during the early stages of 50S assembly. It makes multiple contacts with different domains of the 23S rRNA in the assembled 50S subunit and ribosome.</text>
</comment>
<comment type="function">
    <text evidence="1">Forms part of the polypeptide exit tunnel.</text>
</comment>
<comment type="subunit">
    <text evidence="1">Part of the 50S ribosomal subunit.</text>
</comment>
<comment type="similarity">
    <text evidence="1">Belongs to the universal ribosomal protein uL4 family.</text>
</comment>
<accession>Q5M2B4</accession>
<sequence length="207" mass="22168">MANVKLFDQTGKEVSTVELNDAIFGIEPNESVVFDVVISQRASLRQGTHAVKNRSAVSGGGRKPWRQKGTGRARQGSIRSPQWRGGGVVFGPTPRSYGYKLPQKVRRLALKSVYSAKVAEDKFVAVEALSFAAPKTAEFANVLSALSIDSKVLVIVEEGNKFAELSARNLANVTVATPATASVLDIVNADKLLVTKEAISSIEEVLA</sequence>
<name>RL4_STRT2</name>
<dbReference type="EMBL" id="CP000023">
    <property type="protein sequence ID" value="AAV61531.1"/>
    <property type="molecule type" value="Genomic_DNA"/>
</dbReference>
<dbReference type="RefSeq" id="WP_002885795.1">
    <property type="nucleotide sequence ID" value="NC_006448.1"/>
</dbReference>
<dbReference type="SMR" id="Q5M2B4"/>
<dbReference type="STRING" id="264199.stu1933"/>
<dbReference type="GeneID" id="66899661"/>
<dbReference type="KEGG" id="stl:stu1933"/>
<dbReference type="eggNOG" id="COG0088">
    <property type="taxonomic scope" value="Bacteria"/>
</dbReference>
<dbReference type="HOGENOM" id="CLU_041575_5_2_9"/>
<dbReference type="Proteomes" id="UP000001170">
    <property type="component" value="Chromosome"/>
</dbReference>
<dbReference type="GO" id="GO:1990904">
    <property type="term" value="C:ribonucleoprotein complex"/>
    <property type="evidence" value="ECO:0007669"/>
    <property type="project" value="UniProtKB-KW"/>
</dbReference>
<dbReference type="GO" id="GO:0005840">
    <property type="term" value="C:ribosome"/>
    <property type="evidence" value="ECO:0007669"/>
    <property type="project" value="UniProtKB-KW"/>
</dbReference>
<dbReference type="GO" id="GO:0019843">
    <property type="term" value="F:rRNA binding"/>
    <property type="evidence" value="ECO:0007669"/>
    <property type="project" value="UniProtKB-UniRule"/>
</dbReference>
<dbReference type="GO" id="GO:0003735">
    <property type="term" value="F:structural constituent of ribosome"/>
    <property type="evidence" value="ECO:0007669"/>
    <property type="project" value="InterPro"/>
</dbReference>
<dbReference type="GO" id="GO:0006412">
    <property type="term" value="P:translation"/>
    <property type="evidence" value="ECO:0007669"/>
    <property type="project" value="UniProtKB-UniRule"/>
</dbReference>
<dbReference type="FunFam" id="3.40.1370.10:FF:000003">
    <property type="entry name" value="50S ribosomal protein L4"/>
    <property type="match status" value="1"/>
</dbReference>
<dbReference type="Gene3D" id="3.40.1370.10">
    <property type="match status" value="1"/>
</dbReference>
<dbReference type="HAMAP" id="MF_01328_B">
    <property type="entry name" value="Ribosomal_uL4_B"/>
    <property type="match status" value="1"/>
</dbReference>
<dbReference type="InterPro" id="IPR002136">
    <property type="entry name" value="Ribosomal_uL4"/>
</dbReference>
<dbReference type="InterPro" id="IPR013005">
    <property type="entry name" value="Ribosomal_uL4-like"/>
</dbReference>
<dbReference type="InterPro" id="IPR023574">
    <property type="entry name" value="Ribosomal_uL4_dom_sf"/>
</dbReference>
<dbReference type="NCBIfam" id="TIGR03953">
    <property type="entry name" value="rplD_bact"/>
    <property type="match status" value="1"/>
</dbReference>
<dbReference type="PANTHER" id="PTHR10746">
    <property type="entry name" value="50S RIBOSOMAL PROTEIN L4"/>
    <property type="match status" value="1"/>
</dbReference>
<dbReference type="PANTHER" id="PTHR10746:SF6">
    <property type="entry name" value="LARGE RIBOSOMAL SUBUNIT PROTEIN UL4M"/>
    <property type="match status" value="1"/>
</dbReference>
<dbReference type="Pfam" id="PF00573">
    <property type="entry name" value="Ribosomal_L4"/>
    <property type="match status" value="1"/>
</dbReference>
<dbReference type="SUPFAM" id="SSF52166">
    <property type="entry name" value="Ribosomal protein L4"/>
    <property type="match status" value="1"/>
</dbReference>
<protein>
    <recommendedName>
        <fullName evidence="1">Large ribosomal subunit protein uL4</fullName>
    </recommendedName>
    <alternativeName>
        <fullName evidence="3">50S ribosomal protein L4</fullName>
    </alternativeName>
</protein>
<keyword id="KW-1185">Reference proteome</keyword>
<keyword id="KW-0687">Ribonucleoprotein</keyword>
<keyword id="KW-0689">Ribosomal protein</keyword>
<keyword id="KW-0694">RNA-binding</keyword>
<keyword id="KW-0699">rRNA-binding</keyword>
<reference key="1">
    <citation type="journal article" date="2004" name="Nat. Biotechnol.">
        <title>Complete sequence and comparative genome analysis of the dairy bacterium Streptococcus thermophilus.</title>
        <authorList>
            <person name="Bolotin A."/>
            <person name="Quinquis B."/>
            <person name="Renault P."/>
            <person name="Sorokin A."/>
            <person name="Ehrlich S.D."/>
            <person name="Kulakauskas S."/>
            <person name="Lapidus A."/>
            <person name="Goltsman E."/>
            <person name="Mazur M."/>
            <person name="Pusch G.D."/>
            <person name="Fonstein M."/>
            <person name="Overbeek R."/>
            <person name="Kyprides N."/>
            <person name="Purnelle B."/>
            <person name="Prozzi D."/>
            <person name="Ngui K."/>
            <person name="Masuy D."/>
            <person name="Hancy F."/>
            <person name="Burteau S."/>
            <person name="Boutry M."/>
            <person name="Delcour J."/>
            <person name="Goffeau A."/>
            <person name="Hols P."/>
        </authorList>
    </citation>
    <scope>NUCLEOTIDE SEQUENCE [LARGE SCALE GENOMIC DNA]</scope>
    <source>
        <strain>ATCC BAA-250 / LMG 18311</strain>
    </source>
</reference>